<sequence>MANIKSSIKRIRISQRNRLRNQAIKSHIKWLMKHATKDEVESAIDKAVNKGVIHRNKAVRMKSKYERSHSRSTQ</sequence>
<accession>Q85FR8</accession>
<organism>
    <name type="scientific">Cyanidioschyzon merolae (strain NIES-3377 / 10D)</name>
    <name type="common">Unicellular red alga</name>
    <dbReference type="NCBI Taxonomy" id="280699"/>
    <lineage>
        <taxon>Eukaryota</taxon>
        <taxon>Rhodophyta</taxon>
        <taxon>Bangiophyceae</taxon>
        <taxon>Cyanidiales</taxon>
        <taxon>Cyanidiaceae</taxon>
        <taxon>Cyanidioschyzon</taxon>
    </lineage>
</organism>
<gene>
    <name evidence="1" type="primary">rps20</name>
</gene>
<evidence type="ECO:0000255" key="1">
    <source>
        <dbReference type="HAMAP-Rule" id="MF_00500"/>
    </source>
</evidence>
<evidence type="ECO:0000305" key="2"/>
<reference key="1">
    <citation type="journal article" date="2003" name="DNA Res.">
        <title>Complete sequence and analysis of the plastid genome of the unicellular red alga Cyanidioschyzon merolae.</title>
        <authorList>
            <person name="Ohta N."/>
            <person name="Matsuzaki M."/>
            <person name="Misumi O."/>
            <person name="Miyagishima S.-Y."/>
            <person name="Nozaki H."/>
            <person name="Tanaka K."/>
            <person name="Shin-i T."/>
            <person name="Kohara Y."/>
            <person name="Kuroiwa T."/>
        </authorList>
    </citation>
    <scope>NUCLEOTIDE SEQUENCE [LARGE SCALE GENOMIC DNA]</scope>
    <source>
        <strain>NIES-3377 / 10D</strain>
    </source>
</reference>
<proteinExistence type="inferred from homology"/>
<feature type="chain" id="PRO_0000236466" description="Small ribosomal subunit protein bS20c">
    <location>
        <begin position="1"/>
        <end position="74"/>
    </location>
</feature>
<geneLocation type="chloroplast"/>
<keyword id="KW-0150">Chloroplast</keyword>
<keyword id="KW-0934">Plastid</keyword>
<keyword id="KW-1185">Reference proteome</keyword>
<keyword id="KW-0687">Ribonucleoprotein</keyword>
<keyword id="KW-0689">Ribosomal protein</keyword>
<keyword id="KW-0694">RNA-binding</keyword>
<keyword id="KW-0699">rRNA-binding</keyword>
<comment type="function">
    <text evidence="1">Binds directly to 16S ribosomal RNA.</text>
</comment>
<comment type="subcellular location">
    <subcellularLocation>
        <location>Plastid</location>
        <location>Chloroplast</location>
    </subcellularLocation>
</comment>
<comment type="similarity">
    <text evidence="1">Belongs to the bacterial ribosomal protein bS20 family.</text>
</comment>
<dbReference type="EMBL" id="AB002583">
    <property type="protein sequence ID" value="BAC76277.1"/>
    <property type="molecule type" value="Genomic_DNA"/>
</dbReference>
<dbReference type="RefSeq" id="NP_849115.1">
    <property type="nucleotide sequence ID" value="NC_004799.1"/>
</dbReference>
<dbReference type="SMR" id="Q85FR8"/>
<dbReference type="STRING" id="280699.Q85FR8"/>
<dbReference type="GeneID" id="845009"/>
<dbReference type="KEGG" id="cme:CymeCp183"/>
<dbReference type="HOGENOM" id="CLU_160655_1_0_1"/>
<dbReference type="Proteomes" id="UP000007014">
    <property type="component" value="Chloroplast"/>
</dbReference>
<dbReference type="GO" id="GO:0009507">
    <property type="term" value="C:chloroplast"/>
    <property type="evidence" value="ECO:0007669"/>
    <property type="project" value="UniProtKB-SubCell"/>
</dbReference>
<dbReference type="GO" id="GO:0005829">
    <property type="term" value="C:cytosol"/>
    <property type="evidence" value="ECO:0007669"/>
    <property type="project" value="TreeGrafter"/>
</dbReference>
<dbReference type="GO" id="GO:0015935">
    <property type="term" value="C:small ribosomal subunit"/>
    <property type="evidence" value="ECO:0007669"/>
    <property type="project" value="TreeGrafter"/>
</dbReference>
<dbReference type="GO" id="GO:0070181">
    <property type="term" value="F:small ribosomal subunit rRNA binding"/>
    <property type="evidence" value="ECO:0007669"/>
    <property type="project" value="TreeGrafter"/>
</dbReference>
<dbReference type="GO" id="GO:0003735">
    <property type="term" value="F:structural constituent of ribosome"/>
    <property type="evidence" value="ECO:0007669"/>
    <property type="project" value="InterPro"/>
</dbReference>
<dbReference type="GO" id="GO:0006412">
    <property type="term" value="P:translation"/>
    <property type="evidence" value="ECO:0007669"/>
    <property type="project" value="UniProtKB-UniRule"/>
</dbReference>
<dbReference type="Gene3D" id="1.20.58.110">
    <property type="entry name" value="Ribosomal protein S20"/>
    <property type="match status" value="1"/>
</dbReference>
<dbReference type="HAMAP" id="MF_00500">
    <property type="entry name" value="Ribosomal_bS20"/>
    <property type="match status" value="1"/>
</dbReference>
<dbReference type="InterPro" id="IPR002583">
    <property type="entry name" value="Ribosomal_bS20"/>
</dbReference>
<dbReference type="InterPro" id="IPR036510">
    <property type="entry name" value="Ribosomal_bS20_sf"/>
</dbReference>
<dbReference type="NCBIfam" id="TIGR00029">
    <property type="entry name" value="S20"/>
    <property type="match status" value="1"/>
</dbReference>
<dbReference type="PANTHER" id="PTHR33398">
    <property type="entry name" value="30S RIBOSOMAL PROTEIN S20"/>
    <property type="match status" value="1"/>
</dbReference>
<dbReference type="PANTHER" id="PTHR33398:SF1">
    <property type="entry name" value="SMALL RIBOSOMAL SUBUNIT PROTEIN BS20C"/>
    <property type="match status" value="1"/>
</dbReference>
<dbReference type="Pfam" id="PF01649">
    <property type="entry name" value="Ribosomal_S20p"/>
    <property type="match status" value="2"/>
</dbReference>
<dbReference type="SUPFAM" id="SSF46992">
    <property type="entry name" value="Ribosomal protein S20"/>
    <property type="match status" value="1"/>
</dbReference>
<protein>
    <recommendedName>
        <fullName evidence="1">Small ribosomal subunit protein bS20c</fullName>
    </recommendedName>
    <alternativeName>
        <fullName evidence="2">30S ribosomal protein S20, chloroplastic</fullName>
    </alternativeName>
</protein>
<name>RR20_CYAM1</name>